<comment type="function">
    <text evidence="1">Binds 23S rRNA and is also seen to make contacts with the A and possibly P site tRNAs.</text>
</comment>
<comment type="subunit">
    <text evidence="1">Part of the 50S ribosomal subunit.</text>
</comment>
<comment type="similarity">
    <text evidence="1">Belongs to the universal ribosomal protein uL16 family.</text>
</comment>
<accession>A7GK27</accession>
<gene>
    <name evidence="1" type="primary">rplP</name>
    <name type="ordered locus">Bcer98_0111</name>
</gene>
<dbReference type="EMBL" id="CP000764">
    <property type="protein sequence ID" value="ABS20485.1"/>
    <property type="molecule type" value="Genomic_DNA"/>
</dbReference>
<dbReference type="RefSeq" id="WP_011983252.1">
    <property type="nucleotide sequence ID" value="NC_009674.1"/>
</dbReference>
<dbReference type="SMR" id="A7GK27"/>
<dbReference type="STRING" id="315749.Bcer98_0111"/>
<dbReference type="GeneID" id="33895432"/>
<dbReference type="KEGG" id="bcy:Bcer98_0111"/>
<dbReference type="eggNOG" id="COG0197">
    <property type="taxonomic scope" value="Bacteria"/>
</dbReference>
<dbReference type="HOGENOM" id="CLU_078858_2_1_9"/>
<dbReference type="OrthoDB" id="9802589at2"/>
<dbReference type="Proteomes" id="UP000002300">
    <property type="component" value="Chromosome"/>
</dbReference>
<dbReference type="GO" id="GO:0022625">
    <property type="term" value="C:cytosolic large ribosomal subunit"/>
    <property type="evidence" value="ECO:0007669"/>
    <property type="project" value="TreeGrafter"/>
</dbReference>
<dbReference type="GO" id="GO:0019843">
    <property type="term" value="F:rRNA binding"/>
    <property type="evidence" value="ECO:0007669"/>
    <property type="project" value="UniProtKB-UniRule"/>
</dbReference>
<dbReference type="GO" id="GO:0003735">
    <property type="term" value="F:structural constituent of ribosome"/>
    <property type="evidence" value="ECO:0007669"/>
    <property type="project" value="InterPro"/>
</dbReference>
<dbReference type="GO" id="GO:0000049">
    <property type="term" value="F:tRNA binding"/>
    <property type="evidence" value="ECO:0007669"/>
    <property type="project" value="UniProtKB-KW"/>
</dbReference>
<dbReference type="GO" id="GO:0006412">
    <property type="term" value="P:translation"/>
    <property type="evidence" value="ECO:0007669"/>
    <property type="project" value="UniProtKB-UniRule"/>
</dbReference>
<dbReference type="CDD" id="cd01433">
    <property type="entry name" value="Ribosomal_L16_L10e"/>
    <property type="match status" value="1"/>
</dbReference>
<dbReference type="FunFam" id="3.90.1170.10:FF:000001">
    <property type="entry name" value="50S ribosomal protein L16"/>
    <property type="match status" value="1"/>
</dbReference>
<dbReference type="Gene3D" id="3.90.1170.10">
    <property type="entry name" value="Ribosomal protein L10e/L16"/>
    <property type="match status" value="1"/>
</dbReference>
<dbReference type="HAMAP" id="MF_01342">
    <property type="entry name" value="Ribosomal_uL16"/>
    <property type="match status" value="1"/>
</dbReference>
<dbReference type="InterPro" id="IPR047873">
    <property type="entry name" value="Ribosomal_uL16"/>
</dbReference>
<dbReference type="InterPro" id="IPR000114">
    <property type="entry name" value="Ribosomal_uL16_bact-type"/>
</dbReference>
<dbReference type="InterPro" id="IPR020798">
    <property type="entry name" value="Ribosomal_uL16_CS"/>
</dbReference>
<dbReference type="InterPro" id="IPR016180">
    <property type="entry name" value="Ribosomal_uL16_dom"/>
</dbReference>
<dbReference type="InterPro" id="IPR036920">
    <property type="entry name" value="Ribosomal_uL16_sf"/>
</dbReference>
<dbReference type="NCBIfam" id="TIGR01164">
    <property type="entry name" value="rplP_bact"/>
    <property type="match status" value="1"/>
</dbReference>
<dbReference type="PANTHER" id="PTHR12220">
    <property type="entry name" value="50S/60S RIBOSOMAL PROTEIN L16"/>
    <property type="match status" value="1"/>
</dbReference>
<dbReference type="PANTHER" id="PTHR12220:SF13">
    <property type="entry name" value="LARGE RIBOSOMAL SUBUNIT PROTEIN UL16M"/>
    <property type="match status" value="1"/>
</dbReference>
<dbReference type="Pfam" id="PF00252">
    <property type="entry name" value="Ribosomal_L16"/>
    <property type="match status" value="1"/>
</dbReference>
<dbReference type="PRINTS" id="PR00060">
    <property type="entry name" value="RIBOSOMALL16"/>
</dbReference>
<dbReference type="SUPFAM" id="SSF54686">
    <property type="entry name" value="Ribosomal protein L16p/L10e"/>
    <property type="match status" value="1"/>
</dbReference>
<dbReference type="PROSITE" id="PS00586">
    <property type="entry name" value="RIBOSOMAL_L16_1"/>
    <property type="match status" value="1"/>
</dbReference>
<dbReference type="PROSITE" id="PS00701">
    <property type="entry name" value="RIBOSOMAL_L16_2"/>
    <property type="match status" value="1"/>
</dbReference>
<evidence type="ECO:0000255" key="1">
    <source>
        <dbReference type="HAMAP-Rule" id="MF_01342"/>
    </source>
</evidence>
<evidence type="ECO:0000305" key="2"/>
<organism>
    <name type="scientific">Bacillus cytotoxicus (strain DSM 22905 / CIP 110041 / 391-98 / NVH 391-98)</name>
    <dbReference type="NCBI Taxonomy" id="315749"/>
    <lineage>
        <taxon>Bacteria</taxon>
        <taxon>Bacillati</taxon>
        <taxon>Bacillota</taxon>
        <taxon>Bacilli</taxon>
        <taxon>Bacillales</taxon>
        <taxon>Bacillaceae</taxon>
        <taxon>Bacillus</taxon>
        <taxon>Bacillus cereus group</taxon>
    </lineage>
</organism>
<keyword id="KW-0687">Ribonucleoprotein</keyword>
<keyword id="KW-0689">Ribosomal protein</keyword>
<keyword id="KW-0694">RNA-binding</keyword>
<keyword id="KW-0699">rRNA-binding</keyword>
<keyword id="KW-0820">tRNA-binding</keyword>
<reference key="1">
    <citation type="journal article" date="2008" name="Chem. Biol. Interact.">
        <title>Extending the Bacillus cereus group genomics to putative food-borne pathogens of different toxicity.</title>
        <authorList>
            <person name="Lapidus A."/>
            <person name="Goltsman E."/>
            <person name="Auger S."/>
            <person name="Galleron N."/>
            <person name="Segurens B."/>
            <person name="Dossat C."/>
            <person name="Land M.L."/>
            <person name="Broussolle V."/>
            <person name="Brillard J."/>
            <person name="Guinebretiere M.-H."/>
            <person name="Sanchis V."/>
            <person name="Nguen-the C."/>
            <person name="Lereclus D."/>
            <person name="Richardson P."/>
            <person name="Wincker P."/>
            <person name="Weissenbach J."/>
            <person name="Ehrlich S.D."/>
            <person name="Sorokin A."/>
        </authorList>
    </citation>
    <scope>NUCLEOTIDE SEQUENCE [LARGE SCALE GENOMIC DNA]</scope>
    <source>
        <strain>DSM 22905 / CIP 110041 / 391-98 / NVH 391-98</strain>
    </source>
</reference>
<name>RL16_BACCN</name>
<sequence length="144" mass="16217">MLMPKRVKYRREHRGKMRGRAKGGTEVTFGEFGLQAQNASWITNRQIEAARRAMTRYMKRGGKVWIKIFPSKPYTAKPLEVRMGSGKGAPEGWVAVVKPGKVMFEIAGVSEEVAREALRLAAHKLPVKCKFVKREENGGESNEN</sequence>
<feature type="chain" id="PRO_1000086741" description="Large ribosomal subunit protein uL16">
    <location>
        <begin position="1"/>
        <end position="144"/>
    </location>
</feature>
<proteinExistence type="inferred from homology"/>
<protein>
    <recommendedName>
        <fullName evidence="1">Large ribosomal subunit protein uL16</fullName>
    </recommendedName>
    <alternativeName>
        <fullName evidence="2">50S ribosomal protein L16</fullName>
    </alternativeName>
</protein>